<proteinExistence type="predicted"/>
<name>Y1601_NOSS1</name>
<keyword id="KW-1185">Reference proteome</keyword>
<accession>P46015</accession>
<sequence length="397" mass="44773">MTSLFPHQKAKALKPNSRRPAKELCSECGLCDTYYIHYVKEACAFITQQIDTLEEQAHQRSRNLDNPDELYFGVHQDMIAAKKQQPIAGAQWTGIVSSIAIEMLNHGLVEGVVCVQNSKEDRFQPMPVIARTPEEILAARVNKPTLSPNLSILEQVEKSGMKRLLVIGVGCQIQALRAVEKKLGLEKLYVLGTPCVDNVTRAGLQKFLETTSRSPETVVHYEFMQDFRIHFKHEDGSIEKVPFFGLKTNQLKDVFAPSCMSCFDYVNSLADLVVGYMGAPFGWQWILVRNDTGKEMLDLVQNQLDTQPVMSEGNRQEAVQQGISAYDKGVTLPMWVAKIMGVVIDKIGPKGLEYARFSIDSHFTRNYLFVKRNHPEKLAAHVPEFAKRIVGQYKLPE</sequence>
<dbReference type="EMBL" id="BA000019">
    <property type="protein sequence ID" value="BAB77967.1"/>
    <property type="molecule type" value="Genomic_DNA"/>
</dbReference>
<dbReference type="EMBL" id="U14553">
    <property type="protein sequence ID" value="AAA50354.1"/>
    <property type="molecule type" value="Genomic_DNA"/>
</dbReference>
<dbReference type="PIR" id="AC2006">
    <property type="entry name" value="AC2006"/>
</dbReference>
<dbReference type="RefSeq" id="WP_010995770.1">
    <property type="nucleotide sequence ID" value="NZ_RSCN01000041.1"/>
</dbReference>
<dbReference type="SMR" id="P46015"/>
<dbReference type="STRING" id="103690.gene:10493617"/>
<dbReference type="KEGG" id="ana:all1601"/>
<dbReference type="eggNOG" id="COG1035">
    <property type="taxonomic scope" value="Bacteria"/>
</dbReference>
<dbReference type="OrthoDB" id="593768at2"/>
<dbReference type="Proteomes" id="UP000002483">
    <property type="component" value="Chromosome"/>
</dbReference>
<dbReference type="GO" id="GO:0052592">
    <property type="term" value="F:oxidoreductase activity, acting on CH or CH2 groups, with an iron-sulfur protein as acceptor"/>
    <property type="evidence" value="ECO:0007669"/>
    <property type="project" value="TreeGrafter"/>
</dbReference>
<dbReference type="InterPro" id="IPR007516">
    <property type="entry name" value="Co_F420_Hydgase/DH_bsu_N"/>
</dbReference>
<dbReference type="InterPro" id="IPR045220">
    <property type="entry name" value="FRHB/FDHB/HCAR-like"/>
</dbReference>
<dbReference type="InterPro" id="IPR007525">
    <property type="entry name" value="FrhB_FdhB_C"/>
</dbReference>
<dbReference type="PANTHER" id="PTHR31332">
    <property type="entry name" value="7-HYDROXYMETHYL CHLOROPHYLL A REDUCTASE, CHLOROPLASTIC"/>
    <property type="match status" value="1"/>
</dbReference>
<dbReference type="PANTHER" id="PTHR31332:SF0">
    <property type="entry name" value="7-HYDROXYMETHYL CHLOROPHYLL A REDUCTASE, CHLOROPLASTIC"/>
    <property type="match status" value="1"/>
</dbReference>
<dbReference type="Pfam" id="PF04432">
    <property type="entry name" value="FrhB_FdhB_C"/>
    <property type="match status" value="1"/>
</dbReference>
<dbReference type="Pfam" id="PF04422">
    <property type="entry name" value="FrhB_FdhB_N"/>
    <property type="match status" value="1"/>
</dbReference>
<protein>
    <recommendedName>
        <fullName>Uncharacterized protein all1601</fullName>
    </recommendedName>
</protein>
<reference key="1">
    <citation type="journal article" date="2001" name="DNA Res.">
        <title>Complete genomic sequence of the filamentous nitrogen-fixing cyanobacterium Anabaena sp. strain PCC 7120.</title>
        <authorList>
            <person name="Kaneko T."/>
            <person name="Nakamura Y."/>
            <person name="Wolk C.P."/>
            <person name="Kuritz T."/>
            <person name="Sasamoto S."/>
            <person name="Watanabe A."/>
            <person name="Iriguchi M."/>
            <person name="Ishikawa A."/>
            <person name="Kawashima K."/>
            <person name="Kimura T."/>
            <person name="Kishida Y."/>
            <person name="Kohara M."/>
            <person name="Matsumoto M."/>
            <person name="Matsuno A."/>
            <person name="Muraki A."/>
            <person name="Nakazaki N."/>
            <person name="Shimpo S."/>
            <person name="Sugimoto M."/>
            <person name="Takazawa M."/>
            <person name="Yamada M."/>
            <person name="Yasuda M."/>
            <person name="Tabata S."/>
        </authorList>
    </citation>
    <scope>NUCLEOTIDE SEQUENCE [LARGE SCALE GENOMIC DNA]</scope>
    <source>
        <strain>PCC 7120 / SAG 25.82 / UTEX 2576</strain>
    </source>
</reference>
<reference key="2">
    <citation type="submission" date="1994-09" db="EMBL/GenBank/DDBJ databases">
        <title>Bacterial subtracted cDNA libraries containing genes involved in the differentiation of vegetative cells to heterocysts allow a new twist on an old method of isolating developmental genes.</title>
        <authorList>
            <person name="Bauer C.C."/>
            <person name="Scappino L."/>
            <person name="Haselkorn R."/>
        </authorList>
    </citation>
    <scope>NUCLEOTIDE SEQUENCE [GENOMIC DNA] OF 1-266</scope>
</reference>
<evidence type="ECO:0000305" key="1"/>
<gene>
    <name type="ordered locus">all1601</name>
</gene>
<organism>
    <name type="scientific">Nostoc sp. (strain PCC 7120 / SAG 25.82 / UTEX 2576)</name>
    <dbReference type="NCBI Taxonomy" id="103690"/>
    <lineage>
        <taxon>Bacteria</taxon>
        <taxon>Bacillati</taxon>
        <taxon>Cyanobacteriota</taxon>
        <taxon>Cyanophyceae</taxon>
        <taxon>Nostocales</taxon>
        <taxon>Nostocaceae</taxon>
        <taxon>Nostoc</taxon>
    </lineage>
</organism>
<feature type="chain" id="PRO_0000208894" description="Uncharacterized protein all1601">
    <location>
        <begin position="1"/>
        <end position="397"/>
    </location>
</feature>
<feature type="sequence conflict" description="In Ref. 2; AAA50354." evidence="1" ref="2">
    <original>H</original>
    <variation>R</variation>
    <location>
        <position position="58"/>
    </location>
</feature>
<feature type="sequence conflict" description="In Ref. 2; AAA50354." evidence="1" ref="2">
    <original>EEILAAR</original>
    <variation>RRNTSSC</variation>
    <location>
        <begin position="134"/>
        <end position="140"/>
    </location>
</feature>
<feature type="sequence conflict" description="In Ref. 2; AAA50354." evidence="1" ref="2">
    <original>PNLSILEQVE</original>
    <variation>QTFPYWNSR</variation>
    <location>
        <begin position="148"/>
        <end position="157"/>
    </location>
</feature>